<keyword id="KW-1003">Cell membrane</keyword>
<keyword id="KW-0297">G-protein coupled receptor</keyword>
<keyword id="KW-0325">Glycoprotein</keyword>
<keyword id="KW-0472">Membrane</keyword>
<keyword id="KW-0675">Receptor</keyword>
<keyword id="KW-1185">Reference proteome</keyword>
<keyword id="KW-0807">Transducer</keyword>
<keyword id="KW-0812">Transmembrane</keyword>
<keyword id="KW-1133">Transmembrane helix</keyword>
<comment type="subcellular location">
    <subcellularLocation>
        <location>Cell membrane</location>
        <topology>Multi-pass membrane protein</topology>
    </subcellularLocation>
</comment>
<comment type="similarity">
    <text evidence="2">Belongs to the G-protein coupled receptor 1 family.</text>
</comment>
<organism>
    <name type="scientific">Oryzias latipes</name>
    <name type="common">Japanese rice fish</name>
    <name type="synonym">Japanese killifish</name>
    <dbReference type="NCBI Taxonomy" id="8090"/>
    <lineage>
        <taxon>Eukaryota</taxon>
        <taxon>Metazoa</taxon>
        <taxon>Chordata</taxon>
        <taxon>Craniata</taxon>
        <taxon>Vertebrata</taxon>
        <taxon>Euteleostomi</taxon>
        <taxon>Actinopterygii</taxon>
        <taxon>Neopterygii</taxon>
        <taxon>Teleostei</taxon>
        <taxon>Neoteleostei</taxon>
        <taxon>Acanthomorphata</taxon>
        <taxon>Ovalentaria</taxon>
        <taxon>Atherinomorphae</taxon>
        <taxon>Beloniformes</taxon>
        <taxon>Adrianichthyidae</taxon>
        <taxon>Oryziinae</taxon>
        <taxon>Oryzias</taxon>
    </lineage>
</organism>
<protein>
    <recommendedName>
        <fullName>Probable G-protein coupled receptor</fullName>
    </recommendedName>
</protein>
<dbReference type="EMBL" id="D43633">
    <property type="protein sequence ID" value="BAA07741.1"/>
    <property type="molecule type" value="Genomic_DNA"/>
</dbReference>
<dbReference type="PIR" id="I51087">
    <property type="entry name" value="I51087"/>
</dbReference>
<dbReference type="SMR" id="Q91178"/>
<dbReference type="eggNOG" id="KOG3656">
    <property type="taxonomic scope" value="Eukaryota"/>
</dbReference>
<dbReference type="InParanoid" id="Q91178"/>
<dbReference type="Proteomes" id="UP000001038">
    <property type="component" value="Unplaced"/>
</dbReference>
<dbReference type="Proteomes" id="UP000265180">
    <property type="component" value="Chromosome 9"/>
</dbReference>
<dbReference type="Proteomes" id="UP000265200">
    <property type="component" value="Chromosome 9"/>
</dbReference>
<dbReference type="GO" id="GO:0005768">
    <property type="term" value="C:endosome"/>
    <property type="evidence" value="ECO:0000318"/>
    <property type="project" value="GO_Central"/>
</dbReference>
<dbReference type="GO" id="GO:0005886">
    <property type="term" value="C:plasma membrane"/>
    <property type="evidence" value="ECO:0000318"/>
    <property type="project" value="GO_Central"/>
</dbReference>
<dbReference type="GO" id="GO:0043235">
    <property type="term" value="C:receptor complex"/>
    <property type="evidence" value="ECO:0000318"/>
    <property type="project" value="GO_Central"/>
</dbReference>
<dbReference type="GO" id="GO:0004930">
    <property type="term" value="F:G protein-coupled receptor activity"/>
    <property type="evidence" value="ECO:0000318"/>
    <property type="project" value="GO_Central"/>
</dbReference>
<dbReference type="GO" id="GO:0007186">
    <property type="term" value="P:G protein-coupled receptor signaling pathway"/>
    <property type="evidence" value="ECO:0000318"/>
    <property type="project" value="GO_Central"/>
</dbReference>
<dbReference type="CDD" id="cd15220">
    <property type="entry name" value="7tmA_GPR61_GPR62-like"/>
    <property type="match status" value="1"/>
</dbReference>
<dbReference type="Gene3D" id="1.20.1070.10">
    <property type="entry name" value="Rhodopsin 7-helix transmembrane proteins"/>
    <property type="match status" value="1"/>
</dbReference>
<dbReference type="InterPro" id="IPR000276">
    <property type="entry name" value="GPCR_Rhodpsn"/>
</dbReference>
<dbReference type="InterPro" id="IPR017452">
    <property type="entry name" value="GPCR_Rhodpsn_7TM"/>
</dbReference>
<dbReference type="PANTHER" id="PTHR22752">
    <property type="entry name" value="G PROTEIN-COUPLED RECEPTOR"/>
    <property type="match status" value="1"/>
</dbReference>
<dbReference type="PANTHER" id="PTHR22752:SF11">
    <property type="entry name" value="G-PROTEIN COUPLED RECEPTOR 62"/>
    <property type="match status" value="1"/>
</dbReference>
<dbReference type="Pfam" id="PF00001">
    <property type="entry name" value="7tm_1"/>
    <property type="match status" value="1"/>
</dbReference>
<dbReference type="PRINTS" id="PR00237">
    <property type="entry name" value="GPCRRHODOPSN"/>
</dbReference>
<dbReference type="SUPFAM" id="SSF81321">
    <property type="entry name" value="Family A G protein-coupled receptor-like"/>
    <property type="match status" value="1"/>
</dbReference>
<dbReference type="PROSITE" id="PS00237">
    <property type="entry name" value="G_PROTEIN_RECEP_F1_1"/>
    <property type="match status" value="1"/>
</dbReference>
<dbReference type="PROSITE" id="PS50262">
    <property type="entry name" value="G_PROTEIN_RECEP_F1_2"/>
    <property type="match status" value="1"/>
</dbReference>
<proteinExistence type="inferred from homology"/>
<reference key="1">
    <citation type="journal article" date="1995" name="Biochim. Biophys. Acta">
        <title>Molecular cloning of a fish gene encoding a novel seven-transmembrane receptor related distantly to catecholamine, histamine, and serotonin receptors.</title>
        <authorList>
            <person name="Yasuoka A."/>
            <person name="Abe K."/>
            <person name="Saigo K."/>
            <person name="Arai S."/>
            <person name="Emori Y."/>
        </authorList>
    </citation>
    <scope>NUCLEOTIDE SEQUENCE [GENOMIC DNA]</scope>
</reference>
<feature type="chain" id="PRO_0000069661" description="Probable G-protein coupled receptor">
    <location>
        <begin position="1"/>
        <end position="428" status="greater than"/>
    </location>
</feature>
<feature type="topological domain" description="Extracellular" evidence="1">
    <location>
        <begin position="1"/>
        <end position="46"/>
    </location>
</feature>
<feature type="transmembrane region" description="Helical; Name=1" evidence="1">
    <location>
        <begin position="47"/>
        <end position="67"/>
    </location>
</feature>
<feature type="topological domain" description="Cytoplasmic" evidence="1">
    <location>
        <begin position="68"/>
        <end position="93"/>
    </location>
</feature>
<feature type="transmembrane region" description="Helical; Name=2" evidence="1">
    <location>
        <begin position="94"/>
        <end position="114"/>
    </location>
</feature>
<feature type="topological domain" description="Extracellular" evidence="1">
    <location>
        <begin position="115"/>
        <end position="120"/>
    </location>
</feature>
<feature type="transmembrane region" description="Helical; Name=3" evidence="1">
    <location>
        <begin position="121"/>
        <end position="141"/>
    </location>
</feature>
<feature type="topological domain" description="Cytoplasmic" evidence="1">
    <location>
        <begin position="142"/>
        <end position="162"/>
    </location>
</feature>
<feature type="transmembrane region" description="Helical; Name=4" evidence="1">
    <location>
        <begin position="163"/>
        <end position="183"/>
    </location>
</feature>
<feature type="topological domain" description="Extracellular" evidence="1">
    <location>
        <begin position="184"/>
        <end position="210"/>
    </location>
</feature>
<feature type="transmembrane region" description="Helical; Name=5" evidence="1">
    <location>
        <begin position="211"/>
        <end position="231"/>
    </location>
</feature>
<feature type="topological domain" description="Cytoplasmic" evidence="1">
    <location>
        <begin position="232"/>
        <end position="293"/>
    </location>
</feature>
<feature type="transmembrane region" description="Helical; Name=6" evidence="1">
    <location>
        <begin position="294"/>
        <end position="314"/>
    </location>
</feature>
<feature type="topological domain" description="Extracellular" evidence="1">
    <location>
        <begin position="315"/>
        <end position="428" status="greater than"/>
    </location>
</feature>
<feature type="region of interest" description="Disordered" evidence="3">
    <location>
        <begin position="398"/>
        <end position="428"/>
    </location>
</feature>
<feature type="compositionally biased region" description="Polar residues" evidence="3">
    <location>
        <begin position="398"/>
        <end position="414"/>
    </location>
</feature>
<feature type="glycosylation site" description="N-linked (GlcNAc...) asparagine" evidence="1">
    <location>
        <position position="18"/>
    </location>
</feature>
<feature type="non-terminal residue">
    <location>
        <position position="428"/>
    </location>
</feature>
<accession>Q91178</accession>
<name>GPRX_ORYLA</name>
<sequence length="428" mass="47259">MMADKTSPMITSDHSISNFSTGLFGPHPTVPPDVGVVTSSQSQMKDLFGLFCMVTLNLIALLANTGVMVAIARAPHLKKFAFVCHLCAVDVLCAILLMPLGIISSSPFFGTVVFTILECQVYIFLNVFLIWLSILTITAISVERYFYIVHPMRYEVKMTINLVIGVMLLIWFKSLLLALVTLFGWPPYGHQSSIAASHCSLHASHSRLRGVFAVLFCVICFLAPVVVIFSVYSAVYKVARSAALQQVPAVPTWADASPAKDRSDSINSQTTIITTRTLPQRLSPERAFSGGKAALTLAFIVGQFLVCWLPFFIFHLQMSLTGSMKSPGDLEEAVNWLAYSSFAVNPSFYGLLNRQIRDELVKFRRCCVTQPVEIGPSSLEGSFQENFLQFIQRTSSSSETHPSFANSNPRNMENQAHKIPGQIPEEQA</sequence>
<evidence type="ECO:0000255" key="1"/>
<evidence type="ECO:0000255" key="2">
    <source>
        <dbReference type="PROSITE-ProRule" id="PRU00521"/>
    </source>
</evidence>
<evidence type="ECO:0000256" key="3">
    <source>
        <dbReference type="SAM" id="MobiDB-lite"/>
    </source>
</evidence>